<comment type="function">
    <text evidence="2">Component of the NOP7 complex, which is required for maturation of the 25S and 5.8S ribosomal RNAs and formation of the 60S ribosome.</text>
</comment>
<comment type="subunit">
    <text evidence="2">Component of the NOP7 complex, composed of ERB1, NOP7 and YTM1. The complex is held together by ERB1, which interacts with NOP7 via its N-terminal domain and with YTM1 via a high-affinity interaction between the seven-bladed beta-propeller domains of the 2 proteins. The NOP7 complex associates with the 66S pre-ribosome.</text>
</comment>
<comment type="subcellular location">
    <subcellularLocation>
        <location evidence="2">Nucleus</location>
        <location evidence="2">Nucleolus</location>
    </subcellularLocation>
    <subcellularLocation>
        <location evidence="2">Nucleus</location>
        <location evidence="2">Nucleoplasm</location>
    </subcellularLocation>
</comment>
<comment type="similarity">
    <text evidence="2">Belongs to the WD repeat BOP1/ERB1 family.</text>
</comment>
<reference key="1">
    <citation type="journal article" date="2004" name="Science">
        <title>The Ashbya gossypii genome as a tool for mapping the ancient Saccharomyces cerevisiae genome.</title>
        <authorList>
            <person name="Dietrich F.S."/>
            <person name="Voegeli S."/>
            <person name="Brachat S."/>
            <person name="Lerch A."/>
            <person name="Gates K."/>
            <person name="Steiner S."/>
            <person name="Mohr C."/>
            <person name="Poehlmann R."/>
            <person name="Luedi P."/>
            <person name="Choi S."/>
            <person name="Wing R.A."/>
            <person name="Flavier A."/>
            <person name="Gaffney T.D."/>
            <person name="Philippsen P."/>
        </authorList>
    </citation>
    <scope>NUCLEOTIDE SEQUENCE [LARGE SCALE GENOMIC DNA]</scope>
    <source>
        <strain>ATCC 10895 / CBS 109.51 / FGSC 9923 / NRRL Y-1056</strain>
    </source>
</reference>
<reference key="2">
    <citation type="journal article" date="2013" name="G3 (Bethesda)">
        <title>Genomes of Ashbya fungi isolated from insects reveal four mating-type loci, numerous translocations, lack of transposons, and distinct gene duplications.</title>
        <authorList>
            <person name="Dietrich F.S."/>
            <person name="Voegeli S."/>
            <person name="Kuo S."/>
            <person name="Philippsen P."/>
        </authorList>
    </citation>
    <scope>GENOME REANNOTATION</scope>
    <scope>SEQUENCE REVISION TO 356</scope>
    <source>
        <strain>ATCC 10895 / CBS 109.51 / FGSC 9923 / NRRL Y-1056</strain>
    </source>
</reference>
<dbReference type="EMBL" id="AE016815">
    <property type="protein sequence ID" value="AAS50872.2"/>
    <property type="molecule type" value="Genomic_DNA"/>
</dbReference>
<dbReference type="RefSeq" id="NP_983048.2">
    <property type="nucleotide sequence ID" value="NM_208401.2"/>
</dbReference>
<dbReference type="SMR" id="Q75DC5"/>
<dbReference type="FunCoup" id="Q75DC5">
    <property type="interactions" value="1140"/>
</dbReference>
<dbReference type="STRING" id="284811.Q75DC5"/>
<dbReference type="EnsemblFungi" id="AAS50872">
    <property type="protein sequence ID" value="AAS50872"/>
    <property type="gene ID" value="AGOS_ABR101C"/>
</dbReference>
<dbReference type="GeneID" id="4619152"/>
<dbReference type="KEGG" id="ago:AGOS_ABR101C"/>
<dbReference type="eggNOG" id="KOG0650">
    <property type="taxonomic scope" value="Eukaryota"/>
</dbReference>
<dbReference type="HOGENOM" id="CLU_011390_0_1_1"/>
<dbReference type="InParanoid" id="Q75DC5"/>
<dbReference type="OMA" id="MRPAKGE"/>
<dbReference type="OrthoDB" id="5571054at2759"/>
<dbReference type="Proteomes" id="UP000000591">
    <property type="component" value="Chromosome II"/>
</dbReference>
<dbReference type="GO" id="GO:0005654">
    <property type="term" value="C:nucleoplasm"/>
    <property type="evidence" value="ECO:0007669"/>
    <property type="project" value="UniProtKB-SubCell"/>
</dbReference>
<dbReference type="GO" id="GO:0070545">
    <property type="term" value="C:PeBoW complex"/>
    <property type="evidence" value="ECO:0000318"/>
    <property type="project" value="GO_Central"/>
</dbReference>
<dbReference type="GO" id="GO:0030687">
    <property type="term" value="C:preribosome, large subunit precursor"/>
    <property type="evidence" value="ECO:0000318"/>
    <property type="project" value="GO_Central"/>
</dbReference>
<dbReference type="GO" id="GO:0070180">
    <property type="term" value="F:large ribosomal subunit rRNA binding"/>
    <property type="evidence" value="ECO:0007669"/>
    <property type="project" value="EnsemblFungi"/>
</dbReference>
<dbReference type="GO" id="GO:0043021">
    <property type="term" value="F:ribonucleoprotein complex binding"/>
    <property type="evidence" value="ECO:0000318"/>
    <property type="project" value="GO_Central"/>
</dbReference>
<dbReference type="GO" id="GO:0000466">
    <property type="term" value="P:maturation of 5.8S rRNA from tricistronic rRNA transcript (SSU-rRNA, 5.8S rRNA, LSU-rRNA)"/>
    <property type="evidence" value="ECO:0007669"/>
    <property type="project" value="UniProtKB-UniRule"/>
</dbReference>
<dbReference type="GO" id="GO:0000463">
    <property type="term" value="P:maturation of LSU-rRNA from tricistronic rRNA transcript (SSU-rRNA, 5.8S rRNA, LSU-rRNA)"/>
    <property type="evidence" value="ECO:0000318"/>
    <property type="project" value="GO_Central"/>
</dbReference>
<dbReference type="FunFam" id="2.130.10.10:FF:000061">
    <property type="entry name" value="Ribosome biogenesis protein BOP1 homolog"/>
    <property type="match status" value="1"/>
</dbReference>
<dbReference type="Gene3D" id="2.130.10.10">
    <property type="entry name" value="YVTN repeat-like/Quinoprotein amine dehydrogenase"/>
    <property type="match status" value="1"/>
</dbReference>
<dbReference type="HAMAP" id="MF_03027">
    <property type="entry name" value="BOP1"/>
    <property type="match status" value="1"/>
</dbReference>
<dbReference type="InterPro" id="IPR028598">
    <property type="entry name" value="BOP1/Erb1"/>
</dbReference>
<dbReference type="InterPro" id="IPR012953">
    <property type="entry name" value="BOP1_N_dom"/>
</dbReference>
<dbReference type="InterPro" id="IPR015943">
    <property type="entry name" value="WD40/YVTN_repeat-like_dom_sf"/>
</dbReference>
<dbReference type="InterPro" id="IPR019775">
    <property type="entry name" value="WD40_repeat_CS"/>
</dbReference>
<dbReference type="InterPro" id="IPR036322">
    <property type="entry name" value="WD40_repeat_dom_sf"/>
</dbReference>
<dbReference type="InterPro" id="IPR001680">
    <property type="entry name" value="WD40_rpt"/>
</dbReference>
<dbReference type="PANTHER" id="PTHR17605:SF0">
    <property type="entry name" value="RIBOSOME BIOGENESIS PROTEIN BOP1"/>
    <property type="match status" value="1"/>
</dbReference>
<dbReference type="PANTHER" id="PTHR17605">
    <property type="entry name" value="RIBOSOME BIOGENESIS PROTEIN BOP1 BLOCK OF PROLIFERATION 1 PROTEIN"/>
    <property type="match status" value="1"/>
</dbReference>
<dbReference type="Pfam" id="PF08145">
    <property type="entry name" value="BOP1NT"/>
    <property type="match status" value="1"/>
</dbReference>
<dbReference type="Pfam" id="PF00400">
    <property type="entry name" value="WD40"/>
    <property type="match status" value="3"/>
</dbReference>
<dbReference type="SMART" id="SM01035">
    <property type="entry name" value="BOP1NT"/>
    <property type="match status" value="1"/>
</dbReference>
<dbReference type="SMART" id="SM00320">
    <property type="entry name" value="WD40"/>
    <property type="match status" value="5"/>
</dbReference>
<dbReference type="SUPFAM" id="SSF50978">
    <property type="entry name" value="WD40 repeat-like"/>
    <property type="match status" value="1"/>
</dbReference>
<dbReference type="PROSITE" id="PS00678">
    <property type="entry name" value="WD_REPEATS_1"/>
    <property type="match status" value="1"/>
</dbReference>
<dbReference type="PROSITE" id="PS50082">
    <property type="entry name" value="WD_REPEATS_2"/>
    <property type="match status" value="2"/>
</dbReference>
<dbReference type="PROSITE" id="PS50294">
    <property type="entry name" value="WD_REPEATS_REGION"/>
    <property type="match status" value="2"/>
</dbReference>
<name>ERB1_EREGS</name>
<feature type="chain" id="PRO_0000370415" description="Ribosome biogenesis protein ERB1">
    <location>
        <begin position="1"/>
        <end position="827"/>
    </location>
</feature>
<feature type="repeat" description="WD 1">
    <location>
        <begin position="461"/>
        <end position="500"/>
    </location>
</feature>
<feature type="repeat" description="WD 2">
    <location>
        <begin position="509"/>
        <end position="549"/>
    </location>
</feature>
<feature type="repeat" description="WD 3">
    <location>
        <begin position="657"/>
        <end position="695"/>
    </location>
</feature>
<feature type="repeat" description="WD 4">
    <location>
        <begin position="698"/>
        <end position="737"/>
    </location>
</feature>
<feature type="repeat" description="WD 5">
    <location>
        <begin position="741"/>
        <end position="780"/>
    </location>
</feature>
<feature type="repeat" description="WD 6">
    <location>
        <begin position="796"/>
        <end position="827"/>
    </location>
</feature>
<feature type="region of interest" description="Disordered" evidence="3">
    <location>
        <begin position="1"/>
        <end position="129"/>
    </location>
</feature>
<feature type="region of interest" description="Required for interaction with NOP7" evidence="1">
    <location>
        <begin position="291"/>
        <end position="409"/>
    </location>
</feature>
<feature type="region of interest" description="Required for interaction with YTM1" evidence="1">
    <location>
        <begin position="409"/>
        <end position="445"/>
    </location>
</feature>
<feature type="compositionally biased region" description="Basic and acidic residues" evidence="3">
    <location>
        <begin position="7"/>
        <end position="18"/>
    </location>
</feature>
<feature type="compositionally biased region" description="Acidic residues" evidence="3">
    <location>
        <begin position="45"/>
        <end position="60"/>
    </location>
</feature>
<feature type="compositionally biased region" description="Low complexity" evidence="3">
    <location>
        <begin position="61"/>
        <end position="77"/>
    </location>
</feature>
<feature type="compositionally biased region" description="Acidic residues" evidence="3">
    <location>
        <begin position="81"/>
        <end position="99"/>
    </location>
</feature>
<feature type="compositionally biased region" description="Acidic residues" evidence="3">
    <location>
        <begin position="108"/>
        <end position="124"/>
    </location>
</feature>
<evidence type="ECO:0000250" key="1"/>
<evidence type="ECO:0000255" key="2">
    <source>
        <dbReference type="HAMAP-Rule" id="MF_03027"/>
    </source>
</evidence>
<evidence type="ECO:0000256" key="3">
    <source>
        <dbReference type="SAM" id="MobiDB-lite"/>
    </source>
</evidence>
<protein>
    <recommendedName>
        <fullName evidence="2">Ribosome biogenesis protein ERB1</fullName>
    </recommendedName>
    <alternativeName>
        <fullName evidence="2">Eukaryotic ribosome biogenesis protein 1</fullName>
    </alternativeName>
</protein>
<proteinExistence type="inferred from homology"/>
<gene>
    <name evidence="2" type="primary">ERB1</name>
    <name type="ordered locus">ABR101C</name>
    <name type="ORF">AGOS_ABR101C</name>
</gene>
<keyword id="KW-0539">Nucleus</keyword>
<keyword id="KW-1185">Reference proteome</keyword>
<keyword id="KW-0677">Repeat</keyword>
<keyword id="KW-0690">Ribosome biogenesis</keyword>
<keyword id="KW-0698">rRNA processing</keyword>
<keyword id="KW-0853">WD repeat</keyword>
<sequence length="827" mass="93519">MVHSKKDKSVMKHSDIKKRGAAVLEEEDVLQQDEQLLVDGATIDCDSDDDEEFQSAEEEVLSSGSESSSKEGSTPGSPVEGSDEEAEDEDADEEEDEDAEFNRLLAAEEGDSEGEYGSEDFSDDNDTRPLREKLSSMQLKMIPDGESASVKTRYSDGTPRIIKPEITPVYDSDDTDVETANTIGNIPLSAYDEMPHIGYDINGKRIMRPAKGSALDALLDTIELPEGWTGLLDQNTGSSLNLTPEELDLISKIQKNEQVDDSVDPYEPYVDWFTRHEEIMPVTAIPEPKRRFVPSKHEAKRIMKIVKAIREGRIIPPNKLRELREQEQANNFSYDLWGDSEETNEHIMNLRAPKLPPPTNEESYNPPEEYLLTPEERAEWEKMDPSDRKRNFLPQKYGSLRKVPGYGESVRERFERSLDLYLAPRVRKNKLNIDPESLIPELPSPKDLRPFPIRCSTVYAGHKGKIRTLSIDPSGLWLATGSDDGTVRVWEILTGREVYKATIVDIKNNQDDHIETVEWNPDKTVGLLAVAAGENIYLLVPPIFGFEVENNSRLKIENGYGFDTFGNVKKSALNVNSDDEQAETEATVKKQVAQWNKPTQKQAENDVAIVITCRKTVKKISWHRKGDYFVSVQPESGHTSVLIHQLSKHLTQSPFNKSKGIIMDAKFHPFKPQLFVCSQRYIRIYDLSQQVLVKKLLPGARWLSTIDIHPRGDNLIASSFDKRVLWHDLDLAATPYKTLRYHEKAVRSVGFHKKLPLFCSAADDGTIHVFHGTVYDDMMKNPLLVPLKKLTGHKLVNSLGVLDTVWHPREAWLFSAGADNTARLWTT</sequence>
<organism>
    <name type="scientific">Eremothecium gossypii (strain ATCC 10895 / CBS 109.51 / FGSC 9923 / NRRL Y-1056)</name>
    <name type="common">Yeast</name>
    <name type="synonym">Ashbya gossypii</name>
    <dbReference type="NCBI Taxonomy" id="284811"/>
    <lineage>
        <taxon>Eukaryota</taxon>
        <taxon>Fungi</taxon>
        <taxon>Dikarya</taxon>
        <taxon>Ascomycota</taxon>
        <taxon>Saccharomycotina</taxon>
        <taxon>Saccharomycetes</taxon>
        <taxon>Saccharomycetales</taxon>
        <taxon>Saccharomycetaceae</taxon>
        <taxon>Eremothecium</taxon>
    </lineage>
</organism>
<accession>Q75DC5</accession>